<evidence type="ECO:0000255" key="1">
    <source>
        <dbReference type="HAMAP-Rule" id="MF_01579"/>
    </source>
</evidence>
<evidence type="ECO:0000305" key="2"/>
<protein>
    <recommendedName>
        <fullName evidence="1">Ribosomal RNA small subunit methyltransferase F</fullName>
        <ecNumber evidence="1">2.1.1.178</ecNumber>
    </recommendedName>
    <alternativeName>
        <fullName evidence="1">16S rRNA m5C1407 methyltransferase</fullName>
    </alternativeName>
    <alternativeName>
        <fullName evidence="1">rRNA (cytosine-C(5)-)-methyltransferase RsmF</fullName>
    </alternativeName>
</protein>
<organism>
    <name type="scientific">Salmonella heidelberg (strain SL476)</name>
    <dbReference type="NCBI Taxonomy" id="454169"/>
    <lineage>
        <taxon>Bacteria</taxon>
        <taxon>Pseudomonadati</taxon>
        <taxon>Pseudomonadota</taxon>
        <taxon>Gammaproteobacteria</taxon>
        <taxon>Enterobacterales</taxon>
        <taxon>Enterobacteriaceae</taxon>
        <taxon>Salmonella</taxon>
    </lineage>
</organism>
<comment type="function">
    <text evidence="1">Specifically methylates the cytosine at position 1407 (m5C1407) of 16S rRNA.</text>
</comment>
<comment type="catalytic activity">
    <reaction evidence="1">
        <text>cytidine(1407) in 16S rRNA + S-adenosyl-L-methionine = 5-methylcytidine(1407) in 16S rRNA + S-adenosyl-L-homocysteine + H(+)</text>
        <dbReference type="Rhea" id="RHEA:42756"/>
        <dbReference type="Rhea" id="RHEA-COMP:10223"/>
        <dbReference type="Rhea" id="RHEA-COMP:10224"/>
        <dbReference type="ChEBI" id="CHEBI:15378"/>
        <dbReference type="ChEBI" id="CHEBI:57856"/>
        <dbReference type="ChEBI" id="CHEBI:59789"/>
        <dbReference type="ChEBI" id="CHEBI:74483"/>
        <dbReference type="ChEBI" id="CHEBI:82748"/>
        <dbReference type="EC" id="2.1.1.178"/>
    </reaction>
</comment>
<comment type="subcellular location">
    <subcellularLocation>
        <location evidence="1">Cytoplasm</location>
    </subcellularLocation>
</comment>
<comment type="similarity">
    <text evidence="1">Belongs to the class I-like SAM-binding methyltransferase superfamily. RsmB/NOP family.</text>
</comment>
<comment type="sequence caution" evidence="2">
    <conflict type="erroneous initiation">
        <sequence resource="EMBL-CDS" id="ACF68448"/>
    </conflict>
</comment>
<sequence>MAQHAVYFPDAFLTQMREAMPSTLSFDEFISACQRPLRRSIRINTLKISVADFLALIAPYGWSLTPIPWCHEGFWIERDDEEALPLGSTAEHLSGLFYIQEASSMLPVAALFADDNHPQRVMDMAAAPGSKTTQIAARMGNRGAILANEFSASRVKVLHANISRCGIANTALTHFDGRVFGAALPEMFDAILLDAPCSGEGVVRKDPDALKNWSPESNLDIAATQRELLNSAFHALRPGGTLVYSTCTLNRQENEEVCLWLKETYADAVEFLPLGDLFPDADRALTPEGFLHVFPQIYDCEGFFVARLRKMSSLPAMPAPGYKVGAFPFTPLKGREALHVTQAANAVGLLWDENLHLWQREKEVWLFPAEIESLIGKVRFSRLGIKLAESHNKGYRWQHEATIALACPTHAHAFELSVQEAEEWYRGRDIYPQTPPAADDVLVTFQHQPLGLAKRIGARIKNSYPRELVRDGKLFTGNS</sequence>
<name>RSMF_SALHS</name>
<reference key="1">
    <citation type="journal article" date="2011" name="J. Bacteriol.">
        <title>Comparative genomics of 28 Salmonella enterica isolates: evidence for CRISPR-mediated adaptive sublineage evolution.</title>
        <authorList>
            <person name="Fricke W.F."/>
            <person name="Mammel M.K."/>
            <person name="McDermott P.F."/>
            <person name="Tartera C."/>
            <person name="White D.G."/>
            <person name="Leclerc J.E."/>
            <person name="Ravel J."/>
            <person name="Cebula T.A."/>
        </authorList>
    </citation>
    <scope>NUCLEOTIDE SEQUENCE [LARGE SCALE GENOMIC DNA]</scope>
    <source>
        <strain>SL476</strain>
    </source>
</reference>
<keyword id="KW-0963">Cytoplasm</keyword>
<keyword id="KW-0489">Methyltransferase</keyword>
<keyword id="KW-0694">RNA-binding</keyword>
<keyword id="KW-0698">rRNA processing</keyword>
<keyword id="KW-0949">S-adenosyl-L-methionine</keyword>
<keyword id="KW-0808">Transferase</keyword>
<gene>
    <name evidence="1" type="primary">rsmF</name>
    <name type="ordered locus">SeHA_C2051</name>
</gene>
<accession>B4TKI0</accession>
<feature type="chain" id="PRO_0000382578" description="Ribosomal RNA small subunit methyltransferase F">
    <location>
        <begin position="1"/>
        <end position="479"/>
    </location>
</feature>
<feature type="active site" description="Nucleophile" evidence="1">
    <location>
        <position position="247"/>
    </location>
</feature>
<feature type="binding site" evidence="1">
    <location>
        <begin position="125"/>
        <end position="131"/>
    </location>
    <ligand>
        <name>S-adenosyl-L-methionine</name>
        <dbReference type="ChEBI" id="CHEBI:59789"/>
    </ligand>
</feature>
<feature type="binding site" evidence="1">
    <location>
        <position position="149"/>
    </location>
    <ligand>
        <name>S-adenosyl-L-methionine</name>
        <dbReference type="ChEBI" id="CHEBI:59789"/>
    </ligand>
</feature>
<feature type="binding site" evidence="1">
    <location>
        <position position="176"/>
    </location>
    <ligand>
        <name>S-adenosyl-L-methionine</name>
        <dbReference type="ChEBI" id="CHEBI:59789"/>
    </ligand>
</feature>
<feature type="binding site" evidence="1">
    <location>
        <position position="194"/>
    </location>
    <ligand>
        <name>S-adenosyl-L-methionine</name>
        <dbReference type="ChEBI" id="CHEBI:59789"/>
    </ligand>
</feature>
<dbReference type="EC" id="2.1.1.178" evidence="1"/>
<dbReference type="EMBL" id="CP001120">
    <property type="protein sequence ID" value="ACF68448.1"/>
    <property type="status" value="ALT_INIT"/>
    <property type="molecule type" value="Genomic_DNA"/>
</dbReference>
<dbReference type="RefSeq" id="WP_001531515.1">
    <property type="nucleotide sequence ID" value="NC_011083.1"/>
</dbReference>
<dbReference type="SMR" id="B4TKI0"/>
<dbReference type="KEGG" id="seh:SeHA_C2051"/>
<dbReference type="HOGENOM" id="CLU_005316_6_2_6"/>
<dbReference type="Proteomes" id="UP000001866">
    <property type="component" value="Chromosome"/>
</dbReference>
<dbReference type="GO" id="GO:0005737">
    <property type="term" value="C:cytoplasm"/>
    <property type="evidence" value="ECO:0007669"/>
    <property type="project" value="UniProtKB-SubCell"/>
</dbReference>
<dbReference type="GO" id="GO:0003723">
    <property type="term" value="F:RNA binding"/>
    <property type="evidence" value="ECO:0007669"/>
    <property type="project" value="UniProtKB-KW"/>
</dbReference>
<dbReference type="GO" id="GO:0009383">
    <property type="term" value="F:rRNA (cytosine-C5-)-methyltransferase activity"/>
    <property type="evidence" value="ECO:0007669"/>
    <property type="project" value="TreeGrafter"/>
</dbReference>
<dbReference type="GO" id="GO:0070475">
    <property type="term" value="P:rRNA base methylation"/>
    <property type="evidence" value="ECO:0007669"/>
    <property type="project" value="TreeGrafter"/>
</dbReference>
<dbReference type="FunFam" id="3.10.450.720:FF:000001">
    <property type="entry name" value="Ribosomal RNA small subunit methyltransferase F"/>
    <property type="match status" value="1"/>
</dbReference>
<dbReference type="FunFam" id="3.40.50.150:FF:000079">
    <property type="entry name" value="Ribosomal RNA small subunit methyltransferase F"/>
    <property type="match status" value="1"/>
</dbReference>
<dbReference type="Gene3D" id="3.10.450.720">
    <property type="match status" value="1"/>
</dbReference>
<dbReference type="Gene3D" id="3.40.50.150">
    <property type="entry name" value="Vaccinia Virus protein VP39"/>
    <property type="match status" value="1"/>
</dbReference>
<dbReference type="HAMAP" id="MF_01579">
    <property type="entry name" value="16SrRNA_methyltr_F"/>
    <property type="match status" value="1"/>
</dbReference>
<dbReference type="InterPro" id="IPR031341">
    <property type="entry name" value="Methyltr_RsmF_N"/>
</dbReference>
<dbReference type="InterPro" id="IPR049560">
    <property type="entry name" value="MeTrfase_RsmB-F_NOP2_cat"/>
</dbReference>
<dbReference type="InterPro" id="IPR001678">
    <property type="entry name" value="MeTrfase_RsmB-F_NOP2_dom"/>
</dbReference>
<dbReference type="InterPro" id="IPR027391">
    <property type="entry name" value="Nol1_Nop2_Fmu_2"/>
</dbReference>
<dbReference type="InterPro" id="IPR011023">
    <property type="entry name" value="Nop2p"/>
</dbReference>
<dbReference type="InterPro" id="IPR023267">
    <property type="entry name" value="RCMT"/>
</dbReference>
<dbReference type="InterPro" id="IPR023545">
    <property type="entry name" value="rRNA_ssu_MeTfrase_F"/>
</dbReference>
<dbReference type="InterPro" id="IPR018314">
    <property type="entry name" value="RsmB/NOL1/NOP2-like_CS"/>
</dbReference>
<dbReference type="InterPro" id="IPR029063">
    <property type="entry name" value="SAM-dependent_MTases_sf"/>
</dbReference>
<dbReference type="InterPro" id="IPR048457">
    <property type="entry name" value="YebU_pre-PUA_dom"/>
</dbReference>
<dbReference type="NCBIfam" id="TIGR00446">
    <property type="entry name" value="nop2p"/>
    <property type="match status" value="1"/>
</dbReference>
<dbReference type="NCBIfam" id="NF008898">
    <property type="entry name" value="PRK11933.1"/>
    <property type="match status" value="1"/>
</dbReference>
<dbReference type="PANTHER" id="PTHR22807:SF30">
    <property type="entry name" value="28S RRNA (CYTOSINE(4447)-C(5))-METHYLTRANSFERASE-RELATED"/>
    <property type="match status" value="1"/>
</dbReference>
<dbReference type="PANTHER" id="PTHR22807">
    <property type="entry name" value="NOP2 YEAST -RELATED NOL1/NOP2/FMU SUN DOMAIN-CONTAINING"/>
    <property type="match status" value="1"/>
</dbReference>
<dbReference type="Pfam" id="PF01189">
    <property type="entry name" value="Methyltr_RsmB-F"/>
    <property type="match status" value="1"/>
</dbReference>
<dbReference type="Pfam" id="PF17125">
    <property type="entry name" value="Methyltr_RsmF_N"/>
    <property type="match status" value="1"/>
</dbReference>
<dbReference type="Pfam" id="PF13636">
    <property type="entry name" value="Methyltranf_PUA"/>
    <property type="match status" value="1"/>
</dbReference>
<dbReference type="Pfam" id="PF21150">
    <property type="entry name" value="YebU_pre-PUA_dom"/>
    <property type="match status" value="1"/>
</dbReference>
<dbReference type="PRINTS" id="PR02008">
    <property type="entry name" value="RCMTFAMILY"/>
</dbReference>
<dbReference type="SUPFAM" id="SSF53335">
    <property type="entry name" value="S-adenosyl-L-methionine-dependent methyltransferases"/>
    <property type="match status" value="1"/>
</dbReference>
<dbReference type="PROSITE" id="PS01153">
    <property type="entry name" value="NOL1_NOP2_SUN"/>
    <property type="match status" value="1"/>
</dbReference>
<dbReference type="PROSITE" id="PS51686">
    <property type="entry name" value="SAM_MT_RSMB_NOP"/>
    <property type="match status" value="1"/>
</dbReference>
<proteinExistence type="inferred from homology"/>